<accession>B0FIH7</accession>
<dbReference type="EMBL" id="EU330206">
    <property type="protein sequence ID" value="ABY52816.1"/>
    <property type="molecule type" value="Genomic_DNA"/>
</dbReference>
<dbReference type="RefSeq" id="YP_001671760.1">
    <property type="nucleotide sequence ID" value="NC_010324.1"/>
</dbReference>
<dbReference type="SMR" id="B0FIH7"/>
<dbReference type="GeneID" id="5896882"/>
<dbReference type="KEGG" id="vg:5896882"/>
<dbReference type="Proteomes" id="UP000002006">
    <property type="component" value="Genome"/>
</dbReference>
<dbReference type="GO" id="GO:0098024">
    <property type="term" value="C:virus tail, fiber"/>
    <property type="evidence" value="ECO:0007669"/>
    <property type="project" value="UniProtKB-KW"/>
</dbReference>
<dbReference type="InterPro" id="IPR030392">
    <property type="entry name" value="S74_ICA"/>
</dbReference>
<dbReference type="Pfam" id="PF13884">
    <property type="entry name" value="Peptidase_S74"/>
    <property type="match status" value="1"/>
</dbReference>
<dbReference type="SUPFAM" id="SSF88874">
    <property type="entry name" value="Receptor-binding domain of short tail fibre protein gp12"/>
    <property type="match status" value="1"/>
</dbReference>
<dbReference type="PROSITE" id="PS51688">
    <property type="entry name" value="ICA"/>
    <property type="match status" value="1"/>
</dbReference>
<organismHost>
    <name type="scientific">Escherichia coli</name>
    <dbReference type="NCBI Taxonomy" id="562"/>
</organismHost>
<comment type="function">
    <text evidence="4">Probable tail fiber protein.</text>
</comment>
<comment type="subcellular location">
    <subcellularLocation>
        <location evidence="2">Virion</location>
    </subcellularLocation>
</comment>
<sequence>MARELMPKSGIMMPHVVVTRDAAVVGVSTVDGQAGAIDLTGKYLQKTDAAATYQTKTEGASKDFVLDSIQPIMSGALFREDPWVVNDTPFRSTGANGVESVDMMKVTPDNSIKIGSYASSVQGVEIHSAGRLQVVDQNDSGVETKYPVYSKRYRPEIEDLPFAAIGSYVKDSKGRTIGVNRTGINSDIKQLTQKVTFTQPVTVPDAVGDYDAVTLRQLRNSGGGSGGPTMSGISNFGIGDFHLRDSRAFIPAFEVVSDGQLLNRADYPDLWAYAQLLSPIEDSEWVSNVYQRGKYSKGNGTTTFRVPDRNGVQSGSIQGLFGRGDAGSSGSNGVVSDSGAPNITYSSPHTMVTLASASGQVATNGAIQSITSTDDVAPVGTGGKYISTNFDASRSSAVYGRSLSEVVPRNFIGVWTIRAHGGFTAANTSWSVINSDASEQPTGTPITGGLVSSKYVVGGVDKYRSSIQLLGSNEVDLSTRITTINDRYAIGAATWDFKLDGKLLFNKSLTPKGTGESPGNTYLTLANTWMSAAYSGYIGFVGGGVGVSNGGWRNFISLGSLIFPDSSHPTAVISQVYDYDLSTGSQPNGDIVRNTYFSAESYDITFGNNSGTTNYIFSKSPVSDERLKHSIKEEGTATALSNLNKMEYKTFIYNYDEKATVRRGFIAQQLEAIDPQYVRKYKTFKGTDTLALDENVLLLDAIAAIQELTKKVEVLEAKLAEK</sequence>
<organism evidence="6">
    <name type="scientific">Escherichia phage Phieco32</name>
    <name type="common">Escherichia coli phage phi32</name>
    <dbReference type="NCBI Taxonomy" id="2679905"/>
    <lineage>
        <taxon>Viruses</taxon>
        <taxon>Duplodnaviria</taxon>
        <taxon>Heunggongvirae</taxon>
        <taxon>Uroviricota</taxon>
        <taxon>Caudoviricetes</taxon>
        <taxon>Gordonclarkvirinae</taxon>
        <taxon>Kuravirus</taxon>
        <taxon>Kuravirus phiEco32</taxon>
    </lineage>
</organism>
<protein>
    <recommendedName>
        <fullName evidence="3">Probable tail fiber protein</fullName>
    </recommendedName>
    <alternativeName>
        <fullName evidence="3">Gene product 11</fullName>
        <shortName>gp11</shortName>
    </alternativeName>
</protein>
<feature type="chain" id="PRO_0000432956" description="Probable tail fiber protein">
    <location>
        <begin position="1"/>
        <end position="722"/>
    </location>
</feature>
<feature type="domain" description="Peptidase S74" evidence="1">
    <location>
        <begin position="623"/>
        <end position="719"/>
    </location>
</feature>
<proteinExistence type="predicted"/>
<name>FIB11_BPE32</name>
<evidence type="ECO:0000255" key="1">
    <source>
        <dbReference type="PROSITE-ProRule" id="PRU01025"/>
    </source>
</evidence>
<evidence type="ECO:0000269" key="2">
    <source>
    </source>
</evidence>
<evidence type="ECO:0000305" key="3"/>
<evidence type="ECO:0000305" key="4">
    <source>
    </source>
</evidence>
<evidence type="ECO:0000312" key="5">
    <source>
        <dbReference type="EMBL" id="ABY52816.1"/>
    </source>
</evidence>
<evidence type="ECO:0000312" key="6">
    <source>
        <dbReference type="Proteomes" id="UP000002006"/>
    </source>
</evidence>
<reference key="1">
    <citation type="journal article" date="2008" name="J. Mol. Biol.">
        <title>Genomic and proteomic analysis of phiEco32, a novel Escherichia coli bacteriophage.</title>
        <authorList>
            <person name="Savalia D."/>
            <person name="Westblade L.F."/>
            <person name="Goel M."/>
            <person name="Florens L."/>
            <person name="Kemp P."/>
            <person name="Akulenko N."/>
            <person name="Pavlova O."/>
            <person name="Padovan J.C."/>
            <person name="Chait B.T."/>
            <person name="Washburn M.P."/>
            <person name="Ackermann H.W."/>
            <person name="Mushegian A."/>
            <person name="Gabisonia T."/>
            <person name="Molineux I."/>
            <person name="Severinov K."/>
        </authorList>
    </citation>
    <scope>NUCLEOTIDE SEQUENCE [LARGE SCALE GENOMIC DNA]</scope>
    <scope>FUNCTION</scope>
    <scope>SUBCELLULAR LOCATION</scope>
</reference>
<gene>
    <name evidence="5" type="ORF">phi32_15</name>
</gene>
<keyword id="KW-0426">Late protein</keyword>
<keyword id="KW-1185">Reference proteome</keyword>
<keyword id="KW-1230">Viral tail fiber protein</keyword>
<keyword id="KW-1227">Viral tail protein</keyword>
<keyword id="KW-0946">Virion</keyword>